<sequence length="316" mass="36293">MSSQPLTAANIFAVLRHLRSLCHPTRPVTTASFASSIASQIIPSQAYNNYTSTHYTPLSIPKNGALKQLHFVASYSTAPPAKTEKVTAEDTSLSKSTKPKPKKPLPAWAVQKNALKEKFKEGWKPRKKVSPDTMESIRKLHSMDSVKFSTKNLAEEFKISPEAIRRILKSKWRATEAEEIDRRNRWEKRKIRIQEQMMELGLRHTDPTSKGDPSAEEVLSQRHYSSNSIEDLSGEYPSQNRRREGIPQKRIVPEDNSSRRFDPWEVTADDLLGTKRDYAGDNCAKEDSSKVRRSSTQRHPRRIEYNERSYKEKPDW</sequence>
<keyword id="KW-0496">Mitochondrion</keyword>
<keyword id="KW-0809">Transit peptide</keyword>
<comment type="function">
    <text evidence="1">Required for respiratory activity and maintenance and expression of the mitochondrial genome.</text>
</comment>
<comment type="subcellular location">
    <subcellularLocation>
        <location evidence="1">Mitochondrion</location>
    </subcellularLocation>
</comment>
<comment type="similarity">
    <text evidence="4">Belongs to the RRG9 family.</text>
</comment>
<feature type="transit peptide" description="Mitochondrion" evidence="2">
    <location>
        <begin position="1"/>
        <end position="17"/>
    </location>
</feature>
<feature type="chain" id="PRO_0000407967" description="Required for respiratory growth protein 9, mitochondrial">
    <location>
        <begin position="18"/>
        <end position="316"/>
    </location>
</feature>
<feature type="region of interest" description="Disordered" evidence="3">
    <location>
        <begin position="82"/>
        <end position="105"/>
    </location>
</feature>
<feature type="region of interest" description="Disordered" evidence="3">
    <location>
        <begin position="198"/>
        <end position="316"/>
    </location>
</feature>
<feature type="compositionally biased region" description="Basic and acidic residues" evidence="3">
    <location>
        <begin position="241"/>
        <end position="263"/>
    </location>
</feature>
<feature type="compositionally biased region" description="Basic and acidic residues" evidence="3">
    <location>
        <begin position="272"/>
        <end position="290"/>
    </location>
</feature>
<feature type="compositionally biased region" description="Basic residues" evidence="3">
    <location>
        <begin position="291"/>
        <end position="301"/>
    </location>
</feature>
<feature type="compositionally biased region" description="Basic and acidic residues" evidence="3">
    <location>
        <begin position="302"/>
        <end position="316"/>
    </location>
</feature>
<reference key="1">
    <citation type="journal article" date="2011" name="Genome Biol.">
        <title>Comparative and functional genomics provide insights into the pathogenicity of dermatophytic fungi.</title>
        <authorList>
            <person name="Burmester A."/>
            <person name="Shelest E."/>
            <person name="Gloeckner G."/>
            <person name="Heddergott C."/>
            <person name="Schindler S."/>
            <person name="Staib P."/>
            <person name="Heidel A."/>
            <person name="Felder M."/>
            <person name="Petzold A."/>
            <person name="Szafranski K."/>
            <person name="Feuermann M."/>
            <person name="Pedruzzi I."/>
            <person name="Priebe S."/>
            <person name="Groth M."/>
            <person name="Winkler R."/>
            <person name="Li W."/>
            <person name="Kniemeyer O."/>
            <person name="Schroeckh V."/>
            <person name="Hertweck C."/>
            <person name="Hube B."/>
            <person name="White T.C."/>
            <person name="Platzer M."/>
            <person name="Guthke R."/>
            <person name="Heitman J."/>
            <person name="Woestemeyer J."/>
            <person name="Zipfel P.F."/>
            <person name="Monod M."/>
            <person name="Brakhage A.A."/>
        </authorList>
    </citation>
    <scope>NUCLEOTIDE SEQUENCE [LARGE SCALE GENOMIC DNA]</scope>
    <source>
        <strain>HKI 0517</strain>
    </source>
</reference>
<organism>
    <name type="scientific">Trichophyton verrucosum (strain HKI 0517)</name>
    <dbReference type="NCBI Taxonomy" id="663202"/>
    <lineage>
        <taxon>Eukaryota</taxon>
        <taxon>Fungi</taxon>
        <taxon>Dikarya</taxon>
        <taxon>Ascomycota</taxon>
        <taxon>Pezizomycotina</taxon>
        <taxon>Eurotiomycetes</taxon>
        <taxon>Eurotiomycetidae</taxon>
        <taxon>Onygenales</taxon>
        <taxon>Arthrodermataceae</taxon>
        <taxon>Trichophyton</taxon>
    </lineage>
</organism>
<gene>
    <name type="primary">RRG9</name>
    <name type="ORF">TRV_06580</name>
</gene>
<evidence type="ECO:0000250" key="1"/>
<evidence type="ECO:0000255" key="2"/>
<evidence type="ECO:0000256" key="3">
    <source>
        <dbReference type="SAM" id="MobiDB-lite"/>
    </source>
</evidence>
<evidence type="ECO:0000305" key="4"/>
<name>RRG9_TRIVH</name>
<accession>D4DHC4</accession>
<dbReference type="EMBL" id="ACYE01000377">
    <property type="protein sequence ID" value="EFE38768.1"/>
    <property type="molecule type" value="Genomic_DNA"/>
</dbReference>
<dbReference type="RefSeq" id="XP_003019413.1">
    <property type="nucleotide sequence ID" value="XM_003019367.1"/>
</dbReference>
<dbReference type="SMR" id="D4DHC4"/>
<dbReference type="GeneID" id="9580129"/>
<dbReference type="KEGG" id="tve:TRV_06580"/>
<dbReference type="HOGENOM" id="CLU_933757_0_0_1"/>
<dbReference type="OrthoDB" id="6026at34384"/>
<dbReference type="Proteomes" id="UP000008383">
    <property type="component" value="Unassembled WGS sequence"/>
</dbReference>
<dbReference type="GO" id="GO:0005739">
    <property type="term" value="C:mitochondrion"/>
    <property type="evidence" value="ECO:0007669"/>
    <property type="project" value="UniProtKB-SubCell"/>
</dbReference>
<dbReference type="GO" id="GO:0005634">
    <property type="term" value="C:nucleus"/>
    <property type="evidence" value="ECO:0007669"/>
    <property type="project" value="TreeGrafter"/>
</dbReference>
<dbReference type="InterPro" id="IPR010487">
    <property type="entry name" value="NGRN/Rrg9"/>
</dbReference>
<dbReference type="PANTHER" id="PTHR13475">
    <property type="entry name" value="NEUGRIN"/>
    <property type="match status" value="1"/>
</dbReference>
<dbReference type="PANTHER" id="PTHR13475:SF3">
    <property type="entry name" value="NEUGRIN"/>
    <property type="match status" value="1"/>
</dbReference>
<dbReference type="Pfam" id="PF06413">
    <property type="entry name" value="Neugrin"/>
    <property type="match status" value="1"/>
</dbReference>
<proteinExistence type="inferred from homology"/>
<protein>
    <recommendedName>
        <fullName>Required for respiratory growth protein 9, mitochondrial</fullName>
    </recommendedName>
</protein>